<reference key="1">
    <citation type="journal article" date="2000" name="Eur. J. Biochem.">
        <title>Identification of a nuclear export signal in MKK6, an activator of the carp p38 mitogen-activated protein kinases.</title>
        <authorList>
            <person name="Hashimoto H."/>
            <person name="Fukuda M."/>
            <person name="Matsuo Y."/>
            <person name="Yokoyama Y."/>
            <person name="Nishida E."/>
            <person name="Toyohara H."/>
            <person name="Sakaguchi M."/>
        </authorList>
    </citation>
    <scope>NUCLEOTIDE SEQUENCE [MRNA]</scope>
    <scope>COFACTOR</scope>
    <scope>TISSUE SPECIFICITY</scope>
    <scope>PHOSPHORYLATION AT THR-181 AND TYR-183</scope>
    <scope>ACTIVITY REGULATION</scope>
    <source>
        <tissue>Ovary</tissue>
    </source>
</reference>
<gene>
    <name type="primary">mapk14a</name>
</gene>
<proteinExistence type="evidence at protein level"/>
<comment type="function">
    <text evidence="1">Serine/threonine kinase which acts as an essential component of the MAP kinase signal transduction pathway. Mapk14a is one of the four p38 MAPKs which play an important role in the cascades of cellular responses evoked by extracellular stimuli such as pro-inflammatory cytokines or physical stress leading to direct activation of transcription factors. Accordingly, p38 MAPKs phosphorylate a broad range of proteins and it has been estimated that they may have approximately 200 to 300 substrates each. Some of the targets are downstream kinases which are activated through phosphorylation and further phosphorylate additional targets (By similarity).</text>
</comment>
<comment type="catalytic activity">
    <reaction>
        <text>L-seryl-[protein] + ATP = O-phospho-L-seryl-[protein] + ADP + H(+)</text>
        <dbReference type="Rhea" id="RHEA:17989"/>
        <dbReference type="Rhea" id="RHEA-COMP:9863"/>
        <dbReference type="Rhea" id="RHEA-COMP:11604"/>
        <dbReference type="ChEBI" id="CHEBI:15378"/>
        <dbReference type="ChEBI" id="CHEBI:29999"/>
        <dbReference type="ChEBI" id="CHEBI:30616"/>
        <dbReference type="ChEBI" id="CHEBI:83421"/>
        <dbReference type="ChEBI" id="CHEBI:456216"/>
        <dbReference type="EC" id="2.7.11.24"/>
    </reaction>
</comment>
<comment type="catalytic activity">
    <reaction>
        <text>L-threonyl-[protein] + ATP = O-phospho-L-threonyl-[protein] + ADP + H(+)</text>
        <dbReference type="Rhea" id="RHEA:46608"/>
        <dbReference type="Rhea" id="RHEA-COMP:11060"/>
        <dbReference type="Rhea" id="RHEA-COMP:11605"/>
        <dbReference type="ChEBI" id="CHEBI:15378"/>
        <dbReference type="ChEBI" id="CHEBI:30013"/>
        <dbReference type="ChEBI" id="CHEBI:30616"/>
        <dbReference type="ChEBI" id="CHEBI:61977"/>
        <dbReference type="ChEBI" id="CHEBI:456216"/>
        <dbReference type="EC" id="2.7.11.24"/>
    </reaction>
</comment>
<comment type="cofactor">
    <cofactor evidence="3">
        <name>Mg(2+)</name>
        <dbReference type="ChEBI" id="CHEBI:18420"/>
    </cofactor>
</comment>
<comment type="activity regulation">
    <text evidence="3">Activated by threonine and tyrosine phosphorylation by the dual specificity kinase, MKK6.</text>
</comment>
<comment type="subcellular location">
    <subcellularLocation>
        <location evidence="1">Cytoplasm</location>
    </subcellularLocation>
    <subcellularLocation>
        <location evidence="1">Nucleus</location>
    </subcellularLocation>
</comment>
<comment type="tissue specificity">
    <text evidence="3">Exclusively expressed in the ovary.</text>
</comment>
<comment type="domain">
    <text>The TXY motif contains the threonine and tyrosine residues whose phosphorylation activates the MAP kinases.</text>
</comment>
<comment type="PTM">
    <text evidence="3">Dually phosphorylated on Thr-181 and Tyr-183, which activates the enzyme.</text>
</comment>
<comment type="similarity">
    <text evidence="4">Belongs to the protein kinase superfamily. CMGC Ser/Thr protein kinase family. MAP kinase subfamily.</text>
</comment>
<dbReference type="EC" id="2.7.11.24"/>
<dbReference type="EMBL" id="D83274">
    <property type="protein sequence ID" value="BAA11881.1"/>
    <property type="molecule type" value="mRNA"/>
</dbReference>
<dbReference type="SMR" id="Q90336"/>
<dbReference type="iPTMnet" id="Q90336"/>
<dbReference type="Ensembl" id="ENSCCRT00010044529.1">
    <property type="protein sequence ID" value="ENSCCRP00010040544.1"/>
    <property type="gene ID" value="ENSCCRG00010016535.1"/>
</dbReference>
<dbReference type="Ensembl" id="ENSCCRT00020075981.1">
    <property type="protein sequence ID" value="ENSCCRP00020069126.1"/>
    <property type="gene ID" value="ENSCCRG00020031117.1"/>
</dbReference>
<dbReference type="Proteomes" id="UP000694384">
    <property type="component" value="Unplaced"/>
</dbReference>
<dbReference type="Proteomes" id="UP000694427">
    <property type="component" value="Unplaced"/>
</dbReference>
<dbReference type="Proteomes" id="UP000694700">
    <property type="component" value="Unplaced"/>
</dbReference>
<dbReference type="Proteomes" id="UP000694701">
    <property type="component" value="Unplaced"/>
</dbReference>
<dbReference type="Proteomes" id="UP001155660">
    <property type="component" value="Unplaced"/>
</dbReference>
<dbReference type="GO" id="GO:0005737">
    <property type="term" value="C:cytoplasm"/>
    <property type="evidence" value="ECO:0000250"/>
    <property type="project" value="UniProtKB"/>
</dbReference>
<dbReference type="GO" id="GO:0005634">
    <property type="term" value="C:nucleus"/>
    <property type="evidence" value="ECO:0000250"/>
    <property type="project" value="UniProtKB"/>
</dbReference>
<dbReference type="GO" id="GO:0005524">
    <property type="term" value="F:ATP binding"/>
    <property type="evidence" value="ECO:0007669"/>
    <property type="project" value="UniProtKB-KW"/>
</dbReference>
<dbReference type="GO" id="GO:0004707">
    <property type="term" value="F:MAP kinase activity"/>
    <property type="evidence" value="ECO:0000314"/>
    <property type="project" value="UniProtKB"/>
</dbReference>
<dbReference type="GO" id="GO:0106310">
    <property type="term" value="F:protein serine kinase activity"/>
    <property type="evidence" value="ECO:0007669"/>
    <property type="project" value="RHEA"/>
</dbReference>
<dbReference type="GO" id="GO:0035556">
    <property type="term" value="P:intracellular signal transduction"/>
    <property type="evidence" value="ECO:0000250"/>
    <property type="project" value="UniProtKB"/>
</dbReference>
<dbReference type="GO" id="GO:0038066">
    <property type="term" value="P:p38MAPK cascade"/>
    <property type="evidence" value="ECO:0000314"/>
    <property type="project" value="UniProtKB"/>
</dbReference>
<dbReference type="GO" id="GO:0045663">
    <property type="term" value="P:positive regulation of myoblast differentiation"/>
    <property type="evidence" value="ECO:0000250"/>
    <property type="project" value="UniProtKB"/>
</dbReference>
<dbReference type="GO" id="GO:1901741">
    <property type="term" value="P:positive regulation of myoblast fusion"/>
    <property type="evidence" value="ECO:0000250"/>
    <property type="project" value="UniProtKB"/>
</dbReference>
<dbReference type="GO" id="GO:0010831">
    <property type="term" value="P:positive regulation of myotube differentiation"/>
    <property type="evidence" value="ECO:0000250"/>
    <property type="project" value="UniProtKB"/>
</dbReference>
<dbReference type="GO" id="GO:0006357">
    <property type="term" value="P:regulation of transcription by RNA polymerase II"/>
    <property type="evidence" value="ECO:0000250"/>
    <property type="project" value="UniProtKB"/>
</dbReference>
<dbReference type="CDD" id="cd07877">
    <property type="entry name" value="STKc_p38alpha"/>
    <property type="match status" value="1"/>
</dbReference>
<dbReference type="FunFam" id="1.10.510.10:FF:000063">
    <property type="entry name" value="Mitogen-activated protein kinase 14"/>
    <property type="match status" value="1"/>
</dbReference>
<dbReference type="FunFam" id="3.30.200.20:FF:000769">
    <property type="entry name" value="Mitogen-activated protein kinase 14"/>
    <property type="match status" value="1"/>
</dbReference>
<dbReference type="Gene3D" id="3.30.200.20">
    <property type="entry name" value="Phosphorylase Kinase, domain 1"/>
    <property type="match status" value="1"/>
</dbReference>
<dbReference type="Gene3D" id="1.10.510.10">
    <property type="entry name" value="Transferase(Phosphotransferase) domain 1"/>
    <property type="match status" value="1"/>
</dbReference>
<dbReference type="InterPro" id="IPR011009">
    <property type="entry name" value="Kinase-like_dom_sf"/>
</dbReference>
<dbReference type="InterPro" id="IPR050117">
    <property type="entry name" value="MAP_kinase"/>
</dbReference>
<dbReference type="InterPro" id="IPR003527">
    <property type="entry name" value="MAP_kinase_CS"/>
</dbReference>
<dbReference type="InterPro" id="IPR038784">
    <property type="entry name" value="MAPK14"/>
</dbReference>
<dbReference type="InterPro" id="IPR008352">
    <property type="entry name" value="MAPK_p38-like"/>
</dbReference>
<dbReference type="InterPro" id="IPR000719">
    <property type="entry name" value="Prot_kinase_dom"/>
</dbReference>
<dbReference type="InterPro" id="IPR017441">
    <property type="entry name" value="Protein_kinase_ATP_BS"/>
</dbReference>
<dbReference type="PANTHER" id="PTHR24055">
    <property type="entry name" value="MITOGEN-ACTIVATED PROTEIN KINASE"/>
    <property type="match status" value="1"/>
</dbReference>
<dbReference type="Pfam" id="PF00069">
    <property type="entry name" value="Pkinase"/>
    <property type="match status" value="1"/>
</dbReference>
<dbReference type="PRINTS" id="PR01773">
    <property type="entry name" value="P38MAPKINASE"/>
</dbReference>
<dbReference type="SMART" id="SM00220">
    <property type="entry name" value="S_TKc"/>
    <property type="match status" value="1"/>
</dbReference>
<dbReference type="SUPFAM" id="SSF56112">
    <property type="entry name" value="Protein kinase-like (PK-like)"/>
    <property type="match status" value="1"/>
</dbReference>
<dbReference type="PROSITE" id="PS01351">
    <property type="entry name" value="MAPK"/>
    <property type="match status" value="1"/>
</dbReference>
<dbReference type="PROSITE" id="PS00107">
    <property type="entry name" value="PROTEIN_KINASE_ATP"/>
    <property type="match status" value="1"/>
</dbReference>
<dbReference type="PROSITE" id="PS50011">
    <property type="entry name" value="PROTEIN_KINASE_DOM"/>
    <property type="match status" value="1"/>
</dbReference>
<evidence type="ECO:0000250" key="1"/>
<evidence type="ECO:0000255" key="2">
    <source>
        <dbReference type="PROSITE-ProRule" id="PRU00159"/>
    </source>
</evidence>
<evidence type="ECO:0000269" key="3">
    <source>
    </source>
</evidence>
<evidence type="ECO:0000305" key="4"/>
<sequence>MSQKERPTFHRQEVNKTIWEVPVRYQNLSPVGSGAYGTVCSAYDEKTGLKVAVKKLSRPFQSIIHAKRTYRELRLLKHMKHENVIGLLDVFTPATSLEEFNDVYLVTHLMGADLNNIVKCQKLTDDHVQFLIYQILRGLKYIHSADIIHRDLKPSNLAVNEDCELKILDFGLARHTDDEMTGYVATRWYRAPEIMLNWMHYNMTVDIWSVGCIMAELLTGRTLFPGTDHINQLQQIMRLTGTPPASLISRMPSHEARTYINSLPQMPKRNFSEVFIGANPQAVDLLEKMLVLDTDKRITAAEALAHPYFAQYHDPDDEPEAEPFDQSFESRELDIEEWKRQTYEEVISFEPPVFDGDEMES</sequence>
<name>MK14A_CYPCA</name>
<organism>
    <name type="scientific">Cyprinus carpio</name>
    <name type="common">Common carp</name>
    <dbReference type="NCBI Taxonomy" id="7962"/>
    <lineage>
        <taxon>Eukaryota</taxon>
        <taxon>Metazoa</taxon>
        <taxon>Chordata</taxon>
        <taxon>Craniata</taxon>
        <taxon>Vertebrata</taxon>
        <taxon>Euteleostomi</taxon>
        <taxon>Actinopterygii</taxon>
        <taxon>Neopterygii</taxon>
        <taxon>Teleostei</taxon>
        <taxon>Ostariophysi</taxon>
        <taxon>Cypriniformes</taxon>
        <taxon>Cyprinidae</taxon>
        <taxon>Cyprininae</taxon>
        <taxon>Cyprinus</taxon>
    </lineage>
</organism>
<keyword id="KW-0067">ATP-binding</keyword>
<keyword id="KW-0963">Cytoplasm</keyword>
<keyword id="KW-0418">Kinase</keyword>
<keyword id="KW-0547">Nucleotide-binding</keyword>
<keyword id="KW-0539">Nucleus</keyword>
<keyword id="KW-0597">Phosphoprotein</keyword>
<keyword id="KW-1185">Reference proteome</keyword>
<keyword id="KW-0723">Serine/threonine-protein kinase</keyword>
<keyword id="KW-0346">Stress response</keyword>
<keyword id="KW-0804">Transcription</keyword>
<keyword id="KW-0805">Transcription regulation</keyword>
<keyword id="KW-0808">Transferase</keyword>
<protein>
    <recommendedName>
        <fullName>Mitogen-activated protein kinase 14A</fullName>
        <shortName>MAP kinase 14A</shortName>
        <shortName>MAPK 14A</shortName>
        <ecNumber>2.7.11.24</ecNumber>
    </recommendedName>
    <alternativeName>
        <fullName>Mitogen-activated protein kinase p38a</fullName>
        <shortName>MAP kinase p38a</shortName>
        <shortName>cp38a</shortName>
    </alternativeName>
</protein>
<feature type="chain" id="PRO_0000186296" description="Mitogen-activated protein kinase 14A">
    <location>
        <begin position="1"/>
        <end position="361"/>
    </location>
</feature>
<feature type="domain" description="Protein kinase" evidence="2">
    <location>
        <begin position="25"/>
        <end position="309"/>
    </location>
</feature>
<feature type="short sequence motif" description="TXY">
    <location>
        <begin position="181"/>
        <end position="183"/>
    </location>
</feature>
<feature type="active site" description="Proton acceptor" evidence="2">
    <location>
        <position position="151"/>
    </location>
</feature>
<feature type="binding site" evidence="2">
    <location>
        <begin position="31"/>
        <end position="39"/>
    </location>
    <ligand>
        <name>ATP</name>
        <dbReference type="ChEBI" id="CHEBI:30616"/>
    </ligand>
</feature>
<feature type="binding site" evidence="2">
    <location>
        <position position="54"/>
    </location>
    <ligand>
        <name>ATP</name>
        <dbReference type="ChEBI" id="CHEBI:30616"/>
    </ligand>
</feature>
<feature type="modified residue" description="Phosphothreonine; by MAP2K6" evidence="3">
    <location>
        <position position="181"/>
    </location>
</feature>
<feature type="modified residue" description="Phosphotyrosine; by MAP2K6" evidence="3">
    <location>
        <position position="183"/>
    </location>
</feature>
<accession>Q90336</accession>